<organism>
    <name type="scientific">Escherichia coli (strain K12 / DH10B)</name>
    <dbReference type="NCBI Taxonomy" id="316385"/>
    <lineage>
        <taxon>Bacteria</taxon>
        <taxon>Pseudomonadati</taxon>
        <taxon>Pseudomonadota</taxon>
        <taxon>Gammaproteobacteria</taxon>
        <taxon>Enterobacterales</taxon>
        <taxon>Enterobacteriaceae</taxon>
        <taxon>Escherichia</taxon>
    </lineage>
</organism>
<gene>
    <name evidence="1" type="primary">ycdX</name>
    <name type="ordered locus">ECDH10B_1106</name>
</gene>
<dbReference type="EC" id="3.1.3.-" evidence="1"/>
<dbReference type="EMBL" id="CP000948">
    <property type="protein sequence ID" value="ACB02228.1"/>
    <property type="molecule type" value="Genomic_DNA"/>
</dbReference>
<dbReference type="RefSeq" id="WP_000283667.1">
    <property type="nucleotide sequence ID" value="NC_010473.1"/>
</dbReference>
<dbReference type="SMR" id="B1X9E8"/>
<dbReference type="GeneID" id="75203622"/>
<dbReference type="KEGG" id="ecd:ECDH10B_1106"/>
<dbReference type="HOGENOM" id="CLU_061999_0_1_6"/>
<dbReference type="GO" id="GO:0005829">
    <property type="term" value="C:cytosol"/>
    <property type="evidence" value="ECO:0007669"/>
    <property type="project" value="TreeGrafter"/>
</dbReference>
<dbReference type="GO" id="GO:0016791">
    <property type="term" value="F:phosphatase activity"/>
    <property type="evidence" value="ECO:0007669"/>
    <property type="project" value="UniProtKB-UniRule"/>
</dbReference>
<dbReference type="GO" id="GO:0008270">
    <property type="term" value="F:zinc ion binding"/>
    <property type="evidence" value="ECO:0007669"/>
    <property type="project" value="UniProtKB-UniRule"/>
</dbReference>
<dbReference type="GO" id="GO:0071978">
    <property type="term" value="P:bacterial-type flagellum-dependent swarming motility"/>
    <property type="evidence" value="ECO:0007669"/>
    <property type="project" value="TreeGrafter"/>
</dbReference>
<dbReference type="CDD" id="cd07437">
    <property type="entry name" value="PHP_HisPPase_Ycdx_like"/>
    <property type="match status" value="1"/>
</dbReference>
<dbReference type="FunFam" id="3.20.20.140:FF:000008">
    <property type="entry name" value="Probable phosphatase YcdX"/>
    <property type="match status" value="1"/>
</dbReference>
<dbReference type="Gene3D" id="3.20.20.140">
    <property type="entry name" value="Metal-dependent hydrolases"/>
    <property type="match status" value="1"/>
</dbReference>
<dbReference type="HAMAP" id="MF_01561">
    <property type="entry name" value="YcdX_phosphat"/>
    <property type="match status" value="1"/>
</dbReference>
<dbReference type="InterPro" id="IPR023710">
    <property type="entry name" value="Phosphatase_YcdX_put"/>
</dbReference>
<dbReference type="InterPro" id="IPR004013">
    <property type="entry name" value="PHP_dom"/>
</dbReference>
<dbReference type="InterPro" id="IPR050243">
    <property type="entry name" value="PHP_phosphatase"/>
</dbReference>
<dbReference type="InterPro" id="IPR003141">
    <property type="entry name" value="Pol/His_phosphatase_N"/>
</dbReference>
<dbReference type="InterPro" id="IPR016195">
    <property type="entry name" value="Pol/histidinol_Pase-like"/>
</dbReference>
<dbReference type="NCBIfam" id="NF006702">
    <property type="entry name" value="PRK09248.1"/>
    <property type="match status" value="1"/>
</dbReference>
<dbReference type="PANTHER" id="PTHR36928">
    <property type="entry name" value="PHOSPHATASE YCDX-RELATED"/>
    <property type="match status" value="1"/>
</dbReference>
<dbReference type="PANTHER" id="PTHR36928:SF1">
    <property type="entry name" value="PHOSPHATASE YCDX-RELATED"/>
    <property type="match status" value="1"/>
</dbReference>
<dbReference type="Pfam" id="PF02811">
    <property type="entry name" value="PHP"/>
    <property type="match status" value="1"/>
</dbReference>
<dbReference type="SMART" id="SM00481">
    <property type="entry name" value="POLIIIAc"/>
    <property type="match status" value="1"/>
</dbReference>
<dbReference type="SUPFAM" id="SSF89550">
    <property type="entry name" value="PHP domain-like"/>
    <property type="match status" value="1"/>
</dbReference>
<reference key="1">
    <citation type="journal article" date="2008" name="J. Bacteriol.">
        <title>The complete genome sequence of Escherichia coli DH10B: insights into the biology of a laboratory workhorse.</title>
        <authorList>
            <person name="Durfee T."/>
            <person name="Nelson R."/>
            <person name="Baldwin S."/>
            <person name="Plunkett G. III"/>
            <person name="Burland V."/>
            <person name="Mau B."/>
            <person name="Petrosino J.F."/>
            <person name="Qin X."/>
            <person name="Muzny D.M."/>
            <person name="Ayele M."/>
            <person name="Gibbs R.A."/>
            <person name="Csorgo B."/>
            <person name="Posfai G."/>
            <person name="Weinstock G.M."/>
            <person name="Blattner F.R."/>
        </authorList>
    </citation>
    <scope>NUCLEOTIDE SEQUENCE [LARGE SCALE GENOMIC DNA]</scope>
    <source>
        <strain>K12 / DH10B</strain>
    </source>
</reference>
<sequence>MYPVDLHMHTVASTHAYSTLSDYIAQAKQKGIKLFAITDHGPDMEDAPHHWHFINMRIWPRVVDGVGILRGIEANIKNVDGEIDCSGKMFDSLDLIIAGFHEPVFAPHDKATNTQAMIATIASGNVHIISHPGNPKYEIDVKAVAEAAAKHQVALEINNSSFLHSRKGSEDNCREVAAAVRDAGGWVALGSDSHTAFTMGEFEECLKILDAVDFPPERILNVSPRRLLNFLESRGMAPIAEFADL</sequence>
<accession>B1X9E8</accession>
<keyword id="KW-0378">Hydrolase</keyword>
<keyword id="KW-0479">Metal-binding</keyword>
<keyword id="KW-0862">Zinc</keyword>
<proteinExistence type="inferred from homology"/>
<name>YCDX_ECODH</name>
<evidence type="ECO:0000255" key="1">
    <source>
        <dbReference type="HAMAP-Rule" id="MF_01561"/>
    </source>
</evidence>
<protein>
    <recommendedName>
        <fullName evidence="1">Probable phosphatase YcdX</fullName>
        <ecNumber evidence="1">3.1.3.-</ecNumber>
    </recommendedName>
</protein>
<feature type="chain" id="PRO_1000147133" description="Probable phosphatase YcdX">
    <location>
        <begin position="1"/>
        <end position="245"/>
    </location>
</feature>
<feature type="binding site" evidence="1">
    <location>
        <position position="7"/>
    </location>
    <ligand>
        <name>Zn(2+)</name>
        <dbReference type="ChEBI" id="CHEBI:29105"/>
        <label>1</label>
    </ligand>
</feature>
<feature type="binding site" evidence="1">
    <location>
        <position position="9"/>
    </location>
    <ligand>
        <name>Zn(2+)</name>
        <dbReference type="ChEBI" id="CHEBI:29105"/>
        <label>1</label>
    </ligand>
</feature>
<feature type="binding site" evidence="1">
    <location>
        <position position="15"/>
    </location>
    <ligand>
        <name>Zn(2+)</name>
        <dbReference type="ChEBI" id="CHEBI:29105"/>
        <label>2</label>
    </ligand>
</feature>
<feature type="binding site" evidence="1">
    <location>
        <position position="40"/>
    </location>
    <ligand>
        <name>Zn(2+)</name>
        <dbReference type="ChEBI" id="CHEBI:29105"/>
        <label>2</label>
    </ligand>
</feature>
<feature type="binding site" evidence="1">
    <location>
        <position position="73"/>
    </location>
    <ligand>
        <name>Zn(2+)</name>
        <dbReference type="ChEBI" id="CHEBI:29105"/>
        <label>1</label>
    </ligand>
</feature>
<feature type="binding site" evidence="1">
    <location>
        <position position="73"/>
    </location>
    <ligand>
        <name>Zn(2+)</name>
        <dbReference type="ChEBI" id="CHEBI:29105"/>
        <label>3</label>
    </ligand>
</feature>
<feature type="binding site" evidence="1">
    <location>
        <position position="101"/>
    </location>
    <ligand>
        <name>Zn(2+)</name>
        <dbReference type="ChEBI" id="CHEBI:29105"/>
        <label>3</label>
    </ligand>
</feature>
<feature type="binding site" evidence="1">
    <location>
        <position position="131"/>
    </location>
    <ligand>
        <name>Zn(2+)</name>
        <dbReference type="ChEBI" id="CHEBI:29105"/>
        <label>3</label>
    </ligand>
</feature>
<feature type="binding site" evidence="1">
    <location>
        <position position="192"/>
    </location>
    <ligand>
        <name>Zn(2+)</name>
        <dbReference type="ChEBI" id="CHEBI:29105"/>
        <label>1</label>
    </ligand>
</feature>
<feature type="binding site" evidence="1">
    <location>
        <position position="194"/>
    </location>
    <ligand>
        <name>Zn(2+)</name>
        <dbReference type="ChEBI" id="CHEBI:29105"/>
        <label>2</label>
    </ligand>
</feature>
<comment type="cofactor">
    <cofactor evidence="1">
        <name>Zn(2+)</name>
        <dbReference type="ChEBI" id="CHEBI:29105"/>
    </cofactor>
    <text evidence="1">Binds 3 Zn(2+) ions per subunit.</text>
</comment>
<comment type="subunit">
    <text evidence="1">Homotrimer.</text>
</comment>
<comment type="similarity">
    <text evidence="1">Belongs to the PHP family.</text>
</comment>